<gene>
    <name evidence="1" type="primary">maeA</name>
    <name type="ordered locus">Swoo_0902</name>
</gene>
<reference key="1">
    <citation type="submission" date="2008-02" db="EMBL/GenBank/DDBJ databases">
        <title>Complete sequence of Shewanella woodyi ATCC 51908.</title>
        <authorList>
            <consortium name="US DOE Joint Genome Institute"/>
            <person name="Copeland A."/>
            <person name="Lucas S."/>
            <person name="Lapidus A."/>
            <person name="Glavina del Rio T."/>
            <person name="Dalin E."/>
            <person name="Tice H."/>
            <person name="Bruce D."/>
            <person name="Goodwin L."/>
            <person name="Pitluck S."/>
            <person name="Sims D."/>
            <person name="Brettin T."/>
            <person name="Detter J.C."/>
            <person name="Han C."/>
            <person name="Kuske C.R."/>
            <person name="Schmutz J."/>
            <person name="Larimer F."/>
            <person name="Land M."/>
            <person name="Hauser L."/>
            <person name="Kyrpides N."/>
            <person name="Lykidis A."/>
            <person name="Zhao J.-S."/>
            <person name="Richardson P."/>
        </authorList>
    </citation>
    <scope>NUCLEOTIDE SEQUENCE [LARGE SCALE GENOMIC DNA]</scope>
    <source>
        <strain>ATCC 51908 / MS32</strain>
    </source>
</reference>
<comment type="catalytic activity">
    <reaction evidence="1">
        <text>(S)-malate + NAD(+) = pyruvate + CO2 + NADH</text>
        <dbReference type="Rhea" id="RHEA:12653"/>
        <dbReference type="ChEBI" id="CHEBI:15361"/>
        <dbReference type="ChEBI" id="CHEBI:15589"/>
        <dbReference type="ChEBI" id="CHEBI:16526"/>
        <dbReference type="ChEBI" id="CHEBI:57540"/>
        <dbReference type="ChEBI" id="CHEBI:57945"/>
        <dbReference type="EC" id="1.1.1.38"/>
    </reaction>
</comment>
<comment type="catalytic activity">
    <reaction evidence="1">
        <text>oxaloacetate + H(+) = pyruvate + CO2</text>
        <dbReference type="Rhea" id="RHEA:15641"/>
        <dbReference type="ChEBI" id="CHEBI:15361"/>
        <dbReference type="ChEBI" id="CHEBI:15378"/>
        <dbReference type="ChEBI" id="CHEBI:16452"/>
        <dbReference type="ChEBI" id="CHEBI:16526"/>
        <dbReference type="EC" id="1.1.1.38"/>
    </reaction>
</comment>
<comment type="cofactor">
    <cofactor evidence="1">
        <name>Mg(2+)</name>
        <dbReference type="ChEBI" id="CHEBI:18420"/>
    </cofactor>
    <cofactor evidence="1">
        <name>Mn(2+)</name>
        <dbReference type="ChEBI" id="CHEBI:29035"/>
    </cofactor>
    <text evidence="1">Divalent metal cations. Prefers magnesium or manganese.</text>
</comment>
<comment type="subunit">
    <text evidence="1">Homotetramer.</text>
</comment>
<comment type="similarity">
    <text evidence="1">Belongs to the malic enzymes family.</text>
</comment>
<sequence length="562" mass="62455">MDDHKRPLYLPFAGPAILEAPLINKGSAFTDEERVFFNLEGLLPHVIETIEEQASRAYDQYTNFTNDLDRHIYLRNIQDTNETLYYRLVQNHITEMMPIIYTPTVGMACERFSKNYRRNRGLFISYPHKDRIEDILNNSTRQKVKIIVVTDGERILGLGDQGIGGMGIPIGKLSLYTSCGGISPAYTLPITLDVGTDNPHLLEDPMYMGWRNQRIGGEEYKEFVEAFMQAVNRRWPDALIQFEDFAQKNAMPLLERYKDQYCCFNDDIQGTAAVTVGSLLAACKAAKSQLCEQRIAFLGAGSAGCGIAEAIVAQMVSEGIDEAQARSQVFMVDRWGLLQDNMPNLLNFQEKLAQKTQAVKDWTIENGNISLLDVMNNAKPTVLIGVSGAPGLFSEEIIKAMHQHCPRPIVFPLSNPTSRVEATPKDVLHWTNGQALVATGSPFEPVALNGETFEIAQCNNSYIFPGIGLGVLSAGAKRVSDEMLMASSRALAECSPLALNGEGPLLPPLEEIHQVSKHIAFAVAKVAVEQGHALPCTDELLAQSIENNFWTAEYRRYKRTSF</sequence>
<organism>
    <name type="scientific">Shewanella woodyi (strain ATCC 51908 / MS32)</name>
    <dbReference type="NCBI Taxonomy" id="392500"/>
    <lineage>
        <taxon>Bacteria</taxon>
        <taxon>Pseudomonadati</taxon>
        <taxon>Pseudomonadota</taxon>
        <taxon>Gammaproteobacteria</taxon>
        <taxon>Alteromonadales</taxon>
        <taxon>Shewanellaceae</taxon>
        <taxon>Shewanella</taxon>
    </lineage>
</organism>
<keyword id="KW-0479">Metal-binding</keyword>
<keyword id="KW-0520">NAD</keyword>
<keyword id="KW-0560">Oxidoreductase</keyword>
<keyword id="KW-1185">Reference proteome</keyword>
<dbReference type="EC" id="1.1.1.38" evidence="1"/>
<dbReference type="EMBL" id="CP000961">
    <property type="protein sequence ID" value="ACA85196.1"/>
    <property type="molecule type" value="Genomic_DNA"/>
</dbReference>
<dbReference type="RefSeq" id="WP_012323543.1">
    <property type="nucleotide sequence ID" value="NC_010506.1"/>
</dbReference>
<dbReference type="SMR" id="B1KFN0"/>
<dbReference type="STRING" id="392500.Swoo_0902"/>
<dbReference type="KEGG" id="swd:Swoo_0902"/>
<dbReference type="eggNOG" id="COG0281">
    <property type="taxonomic scope" value="Bacteria"/>
</dbReference>
<dbReference type="HOGENOM" id="CLU_011405_5_2_6"/>
<dbReference type="Proteomes" id="UP000002168">
    <property type="component" value="Chromosome"/>
</dbReference>
<dbReference type="GO" id="GO:0005829">
    <property type="term" value="C:cytosol"/>
    <property type="evidence" value="ECO:0007669"/>
    <property type="project" value="TreeGrafter"/>
</dbReference>
<dbReference type="GO" id="GO:0004471">
    <property type="term" value="F:malate dehydrogenase (decarboxylating) (NAD+) activity"/>
    <property type="evidence" value="ECO:0007669"/>
    <property type="project" value="UniProtKB-UniRule"/>
</dbReference>
<dbReference type="GO" id="GO:0046872">
    <property type="term" value="F:metal ion binding"/>
    <property type="evidence" value="ECO:0007669"/>
    <property type="project" value="UniProtKB-KW"/>
</dbReference>
<dbReference type="GO" id="GO:0051287">
    <property type="term" value="F:NAD binding"/>
    <property type="evidence" value="ECO:0007669"/>
    <property type="project" value="InterPro"/>
</dbReference>
<dbReference type="GO" id="GO:0008948">
    <property type="term" value="F:oxaloacetate decarboxylase activity"/>
    <property type="evidence" value="ECO:0007669"/>
    <property type="project" value="UniProtKB-UniRule"/>
</dbReference>
<dbReference type="GO" id="GO:0006108">
    <property type="term" value="P:malate metabolic process"/>
    <property type="evidence" value="ECO:0007669"/>
    <property type="project" value="TreeGrafter"/>
</dbReference>
<dbReference type="CDD" id="cd05312">
    <property type="entry name" value="NAD_bind_1_malic_enz"/>
    <property type="match status" value="1"/>
</dbReference>
<dbReference type="FunFam" id="3.40.50.10380:FF:000001">
    <property type="entry name" value="NAD-dependent malic enzyme"/>
    <property type="match status" value="1"/>
</dbReference>
<dbReference type="FunFam" id="3.40.50.720:FF:000055">
    <property type="entry name" value="NAD-dependent malic enzyme"/>
    <property type="match status" value="1"/>
</dbReference>
<dbReference type="Gene3D" id="3.40.50.10380">
    <property type="entry name" value="Malic enzyme, N-terminal domain"/>
    <property type="match status" value="1"/>
</dbReference>
<dbReference type="Gene3D" id="3.40.50.720">
    <property type="entry name" value="NAD(P)-binding Rossmann-like Domain"/>
    <property type="match status" value="1"/>
</dbReference>
<dbReference type="HAMAP" id="MF_01619">
    <property type="entry name" value="NAD_malic_enz"/>
    <property type="match status" value="1"/>
</dbReference>
<dbReference type="InterPro" id="IPR046346">
    <property type="entry name" value="Aminoacid_DH-like_N_sf"/>
</dbReference>
<dbReference type="InterPro" id="IPR015884">
    <property type="entry name" value="Malic_enzyme_CS"/>
</dbReference>
<dbReference type="InterPro" id="IPR012301">
    <property type="entry name" value="Malic_N_dom"/>
</dbReference>
<dbReference type="InterPro" id="IPR037062">
    <property type="entry name" value="Malic_N_dom_sf"/>
</dbReference>
<dbReference type="InterPro" id="IPR012302">
    <property type="entry name" value="Malic_NAD-bd"/>
</dbReference>
<dbReference type="InterPro" id="IPR001891">
    <property type="entry name" value="Malic_OxRdtase"/>
</dbReference>
<dbReference type="InterPro" id="IPR036291">
    <property type="entry name" value="NAD(P)-bd_dom_sf"/>
</dbReference>
<dbReference type="InterPro" id="IPR023667">
    <property type="entry name" value="NAD_malic_enz_proteobac"/>
</dbReference>
<dbReference type="NCBIfam" id="NF010052">
    <property type="entry name" value="PRK13529.1"/>
    <property type="match status" value="1"/>
</dbReference>
<dbReference type="PANTHER" id="PTHR23406">
    <property type="entry name" value="MALIC ENZYME-RELATED"/>
    <property type="match status" value="1"/>
</dbReference>
<dbReference type="PANTHER" id="PTHR23406:SF34">
    <property type="entry name" value="NAD-DEPENDENT MALIC ENZYME, MITOCHONDRIAL"/>
    <property type="match status" value="1"/>
</dbReference>
<dbReference type="Pfam" id="PF00390">
    <property type="entry name" value="malic"/>
    <property type="match status" value="1"/>
</dbReference>
<dbReference type="Pfam" id="PF03949">
    <property type="entry name" value="Malic_M"/>
    <property type="match status" value="1"/>
</dbReference>
<dbReference type="PIRSF" id="PIRSF000106">
    <property type="entry name" value="ME"/>
    <property type="match status" value="1"/>
</dbReference>
<dbReference type="PRINTS" id="PR00072">
    <property type="entry name" value="MALOXRDTASE"/>
</dbReference>
<dbReference type="SMART" id="SM01274">
    <property type="entry name" value="malic"/>
    <property type="match status" value="1"/>
</dbReference>
<dbReference type="SMART" id="SM00919">
    <property type="entry name" value="Malic_M"/>
    <property type="match status" value="1"/>
</dbReference>
<dbReference type="SUPFAM" id="SSF53223">
    <property type="entry name" value="Aminoacid dehydrogenase-like, N-terminal domain"/>
    <property type="match status" value="1"/>
</dbReference>
<dbReference type="SUPFAM" id="SSF51735">
    <property type="entry name" value="NAD(P)-binding Rossmann-fold domains"/>
    <property type="match status" value="1"/>
</dbReference>
<dbReference type="PROSITE" id="PS00331">
    <property type="entry name" value="MALIC_ENZYMES"/>
    <property type="match status" value="1"/>
</dbReference>
<name>MAO1_SHEWM</name>
<proteinExistence type="inferred from homology"/>
<feature type="chain" id="PRO_1000186012" description="NAD-dependent malic enzyme">
    <location>
        <begin position="1"/>
        <end position="562"/>
    </location>
</feature>
<feature type="active site" description="Proton donor" evidence="1">
    <location>
        <position position="101"/>
    </location>
</feature>
<feature type="active site" description="Proton acceptor" evidence="1">
    <location>
        <position position="172"/>
    </location>
</feature>
<feature type="binding site" evidence="1">
    <location>
        <position position="154"/>
    </location>
    <ligand>
        <name>NAD(+)</name>
        <dbReference type="ChEBI" id="CHEBI:57540"/>
    </ligand>
</feature>
<feature type="binding site" evidence="1">
    <location>
        <position position="243"/>
    </location>
    <ligand>
        <name>a divalent metal cation</name>
        <dbReference type="ChEBI" id="CHEBI:60240"/>
    </ligand>
</feature>
<feature type="binding site" evidence="1">
    <location>
        <position position="244"/>
    </location>
    <ligand>
        <name>a divalent metal cation</name>
        <dbReference type="ChEBI" id="CHEBI:60240"/>
    </ligand>
</feature>
<feature type="binding site" evidence="1">
    <location>
        <position position="267"/>
    </location>
    <ligand>
        <name>a divalent metal cation</name>
        <dbReference type="ChEBI" id="CHEBI:60240"/>
    </ligand>
</feature>
<feature type="binding site" evidence="1">
    <location>
        <position position="267"/>
    </location>
    <ligand>
        <name>NAD(+)</name>
        <dbReference type="ChEBI" id="CHEBI:57540"/>
    </ligand>
</feature>
<feature type="binding site" evidence="1">
    <location>
        <position position="415"/>
    </location>
    <ligand>
        <name>NAD(+)</name>
        <dbReference type="ChEBI" id="CHEBI:57540"/>
    </ligand>
</feature>
<feature type="site" description="Important for activity" evidence="1">
    <location>
        <position position="267"/>
    </location>
</feature>
<protein>
    <recommendedName>
        <fullName evidence="1">NAD-dependent malic enzyme</fullName>
        <shortName evidence="1">NAD-ME</shortName>
        <ecNumber evidence="1">1.1.1.38</ecNumber>
    </recommendedName>
</protein>
<accession>B1KFN0</accession>
<evidence type="ECO:0000255" key="1">
    <source>
        <dbReference type="HAMAP-Rule" id="MF_01619"/>
    </source>
</evidence>